<dbReference type="EMBL" id="LT708304">
    <property type="protein sequence ID" value="SIT99903.1"/>
    <property type="molecule type" value="Genomic_DNA"/>
</dbReference>
<dbReference type="RefSeq" id="NP_854954.1">
    <property type="nucleotide sequence ID" value="NC_002945.3"/>
</dbReference>
<dbReference type="RefSeq" id="WP_003406558.1">
    <property type="nucleotide sequence ID" value="NC_002945.4"/>
</dbReference>
<dbReference type="SMR" id="P0A5E2"/>
<dbReference type="KEGG" id="mbo:BQ2027_MB1300C"/>
<dbReference type="PATRIC" id="fig|233413.5.peg.1425"/>
<dbReference type="Proteomes" id="UP000001419">
    <property type="component" value="Chromosome"/>
</dbReference>
<dbReference type="InterPro" id="IPR025240">
    <property type="entry name" value="DUF4189"/>
</dbReference>
<dbReference type="InterPro" id="IPR006311">
    <property type="entry name" value="TAT_signal"/>
</dbReference>
<dbReference type="Pfam" id="PF13827">
    <property type="entry name" value="DUF4189"/>
    <property type="match status" value="1"/>
</dbReference>
<dbReference type="PROSITE" id="PS51318">
    <property type="entry name" value="TAT"/>
    <property type="match status" value="1"/>
</dbReference>
<feature type="signal peptide" description="Tat-type signal" evidence="1">
    <location>
        <begin position="1"/>
        <end position="35"/>
    </location>
</feature>
<feature type="chain" id="PRO_0000014090" description="Protein Mb1300c">
    <location>
        <begin position="36"/>
        <end position="124"/>
    </location>
</feature>
<accession>P0A5E2</accession>
<accession>A0A1R3XYT7</accession>
<accession>Q11050</accession>
<accession>X2BH85</accession>
<proteinExistence type="inferred from homology"/>
<sequence length="124" mass="12550">MTTMITLRRRFAVAVAGVATAAATTVTLAPAPANAADVYGAIAYSGNGSWGRSWDYPTRAAAEATAVKSCGYSDCKVLTSFTACGAVAANDRAYQGGVGPTLAAAMKDALTKLGGGYIDTWACN</sequence>
<organism>
    <name type="scientific">Mycobacterium bovis (strain ATCC BAA-935 / AF2122/97)</name>
    <dbReference type="NCBI Taxonomy" id="233413"/>
    <lineage>
        <taxon>Bacteria</taxon>
        <taxon>Bacillati</taxon>
        <taxon>Actinomycetota</taxon>
        <taxon>Actinomycetes</taxon>
        <taxon>Mycobacteriales</taxon>
        <taxon>Mycobacteriaceae</taxon>
        <taxon>Mycobacterium</taxon>
        <taxon>Mycobacterium tuberculosis complex</taxon>
    </lineage>
</organism>
<keyword id="KW-1185">Reference proteome</keyword>
<keyword id="KW-0732">Signal</keyword>
<gene>
    <name type="ordered locus">BQ2027_MB1300C</name>
</gene>
<protein>
    <recommendedName>
        <fullName>Protein Mb1300c</fullName>
    </recommendedName>
</protein>
<comment type="PTM">
    <text>Predicted to be exported by the Tat system. The position of the signal peptide cleavage has not been experimentally proven.</text>
</comment>
<comment type="similarity">
    <text evidence="2">To M.tuberculosis Rv1813c.</text>
</comment>
<reference key="1">
    <citation type="journal article" date="2003" name="Proc. Natl. Acad. Sci. U.S.A.">
        <title>The complete genome sequence of Mycobacterium bovis.</title>
        <authorList>
            <person name="Garnier T."/>
            <person name="Eiglmeier K."/>
            <person name="Camus J.-C."/>
            <person name="Medina N."/>
            <person name="Mansoor H."/>
            <person name="Pryor M."/>
            <person name="Duthoy S."/>
            <person name="Grondin S."/>
            <person name="Lacroix C."/>
            <person name="Monsempe C."/>
            <person name="Simon S."/>
            <person name="Harris B."/>
            <person name="Atkin R."/>
            <person name="Doggett J."/>
            <person name="Mayes R."/>
            <person name="Keating L."/>
            <person name="Wheeler P.R."/>
            <person name="Parkhill J."/>
            <person name="Barrell B.G."/>
            <person name="Cole S.T."/>
            <person name="Gordon S.V."/>
            <person name="Hewinson R.G."/>
        </authorList>
    </citation>
    <scope>NUCLEOTIDE SEQUENCE [LARGE SCALE GENOMIC DNA]</scope>
    <source>
        <strain>ATCC BAA-935 / AF2122/97</strain>
    </source>
</reference>
<reference key="2">
    <citation type="journal article" date="2017" name="Genome Announc.">
        <title>Updated reference genome sequence and annotation of Mycobacterium bovis AF2122/97.</title>
        <authorList>
            <person name="Malone K.M."/>
            <person name="Farrell D."/>
            <person name="Stuber T.P."/>
            <person name="Schubert O.T."/>
            <person name="Aebersold R."/>
            <person name="Robbe-Austerman S."/>
            <person name="Gordon S.V."/>
        </authorList>
    </citation>
    <scope>NUCLEOTIDE SEQUENCE [LARGE SCALE GENOMIC DNA]</scope>
    <scope>GENOME REANNOTATION</scope>
    <source>
        <strain>ATCC BAA-935 / AF2122/97</strain>
    </source>
</reference>
<evidence type="ECO:0000255" key="1">
    <source>
        <dbReference type="PROSITE-ProRule" id="PRU00648"/>
    </source>
</evidence>
<evidence type="ECO:0000305" key="2"/>
<name>Y1300_MYCBO</name>